<organism>
    <name type="scientific">Gorilla gorilla gorilla</name>
    <name type="common">Western lowland gorilla</name>
    <dbReference type="NCBI Taxonomy" id="9595"/>
    <lineage>
        <taxon>Eukaryota</taxon>
        <taxon>Metazoa</taxon>
        <taxon>Chordata</taxon>
        <taxon>Craniata</taxon>
        <taxon>Vertebrata</taxon>
        <taxon>Euteleostomi</taxon>
        <taxon>Mammalia</taxon>
        <taxon>Eutheria</taxon>
        <taxon>Euarchontoglires</taxon>
        <taxon>Primates</taxon>
        <taxon>Haplorrhini</taxon>
        <taxon>Catarrhini</taxon>
        <taxon>Hominidae</taxon>
        <taxon>Gorilla</taxon>
    </lineage>
</organism>
<accession>Q0MQA4</accession>
<name>NDUA6_GORGO</name>
<feature type="initiator methionine" description="Removed" evidence="2">
    <location>
        <position position="1"/>
    </location>
</feature>
<feature type="chain" id="PRO_0000251167" description="NADH dehydrogenase [ubiquinone] 1 alpha subcomplex subunit 6">
    <location>
        <begin position="2"/>
        <end position="128"/>
    </location>
</feature>
<feature type="modified residue" description="N-acetylalanine" evidence="2">
    <location>
        <position position="2"/>
    </location>
</feature>
<feature type="modified residue" description="Phosphoserine" evidence="1">
    <location>
        <position position="11"/>
    </location>
</feature>
<gene>
    <name evidence="1" type="primary">NDUFA6</name>
</gene>
<evidence type="ECO:0000250" key="1">
    <source>
        <dbReference type="UniProtKB" id="P56556"/>
    </source>
</evidence>
<evidence type="ECO:0000250" key="2">
    <source>
        <dbReference type="UniProtKB" id="Q02366"/>
    </source>
</evidence>
<evidence type="ECO:0000305" key="3"/>
<keyword id="KW-0007">Acetylation</keyword>
<keyword id="KW-0249">Electron transport</keyword>
<keyword id="KW-0472">Membrane</keyword>
<keyword id="KW-0496">Mitochondrion</keyword>
<keyword id="KW-0999">Mitochondrion inner membrane</keyword>
<keyword id="KW-0597">Phosphoprotein</keyword>
<keyword id="KW-1185">Reference proteome</keyword>
<keyword id="KW-0679">Respiratory chain</keyword>
<keyword id="KW-0813">Transport</keyword>
<proteinExistence type="evidence at transcript level"/>
<sequence>MAGSGVRQATSTASTFVKPIFSRDMNEAKRRVRELYRAWYREVPNTVHQFQLDITVKMGRDKVREMFMKNAHVTDPRVVDLLVIKGKIELEETIKVWKQRTHVMRFFHETEAPRPKDFLSKFYVGHDP</sequence>
<reference key="1">
    <citation type="journal article" date="2006" name="Gene">
        <title>Adaptive selection of mitochondrial complex I subunits during primate radiation.</title>
        <authorList>
            <person name="Mishmar D."/>
            <person name="Ruiz-Pesini E."/>
            <person name="Mondragon-Palomino M."/>
            <person name="Procaccio V."/>
            <person name="Gaut B."/>
            <person name="Wallace D.C."/>
        </authorList>
    </citation>
    <scope>NUCLEOTIDE SEQUENCE [MRNA]</scope>
</reference>
<protein>
    <recommendedName>
        <fullName evidence="1">NADH dehydrogenase [ubiquinone] 1 alpha subcomplex subunit 6</fullName>
    </recommendedName>
    <alternativeName>
        <fullName>Complex I-B14</fullName>
        <shortName>CI-B14</shortName>
    </alternativeName>
    <alternativeName>
        <fullName>NADH-ubiquinone oxidoreductase B14 subunit</fullName>
    </alternativeName>
</protein>
<comment type="function">
    <text evidence="1">Accessory subunit of the mitochondrial membrane respiratory chain NADH dehydrogenase (Complex I), that is believed to be not involved in catalysis. Required for proper complex I assembly. Complex I functions in the transfer of electrons from NADH to the respiratory chain. The immediate electron acceptor for the enzyme is believed to be ubiquinone.</text>
</comment>
<comment type="subunit">
    <text evidence="1">Mammalian complex I is composed of 45 different subunits.</text>
</comment>
<comment type="subcellular location">
    <subcellularLocation>
        <location evidence="1">Mitochondrion inner membrane</location>
        <topology evidence="1">Peripheral membrane protein</topology>
        <orientation evidence="1">Matrix side</orientation>
    </subcellularLocation>
</comment>
<comment type="similarity">
    <text evidence="3">Belongs to the complex I LYR family.</text>
</comment>
<dbReference type="EMBL" id="DQ885730">
    <property type="protein sequence ID" value="ABH12239.1"/>
    <property type="molecule type" value="mRNA"/>
</dbReference>
<dbReference type="RefSeq" id="NP_001266660.1">
    <property type="nucleotide sequence ID" value="NM_001279731.1"/>
</dbReference>
<dbReference type="SMR" id="Q0MQA4"/>
<dbReference type="FunCoup" id="Q0MQA4">
    <property type="interactions" value="1204"/>
</dbReference>
<dbReference type="STRING" id="9593.ENSGGOP00000007730"/>
<dbReference type="GeneID" id="101135077"/>
<dbReference type="KEGG" id="ggo:101135077"/>
<dbReference type="CTD" id="4700"/>
<dbReference type="eggNOG" id="KOG3426">
    <property type="taxonomic scope" value="Eukaryota"/>
</dbReference>
<dbReference type="InParanoid" id="Q0MQA4"/>
<dbReference type="OrthoDB" id="1171at9604"/>
<dbReference type="Proteomes" id="UP000001519">
    <property type="component" value="Unplaced"/>
</dbReference>
<dbReference type="GO" id="GO:0005743">
    <property type="term" value="C:mitochondrial inner membrane"/>
    <property type="evidence" value="ECO:0007669"/>
    <property type="project" value="UniProtKB-SubCell"/>
</dbReference>
<dbReference type="GO" id="GO:0045271">
    <property type="term" value="C:respiratory chain complex I"/>
    <property type="evidence" value="ECO:0000250"/>
    <property type="project" value="UniProtKB"/>
</dbReference>
<dbReference type="GO" id="GO:0032981">
    <property type="term" value="P:mitochondrial respiratory chain complex I assembly"/>
    <property type="evidence" value="ECO:0000250"/>
    <property type="project" value="UniProtKB"/>
</dbReference>
<dbReference type="CDD" id="cd20266">
    <property type="entry name" value="Complex1_LYR_NDUFA6_LYRM6"/>
    <property type="match status" value="1"/>
</dbReference>
<dbReference type="InterPro" id="IPR045299">
    <property type="entry name" value="Complex1_LYR_NDUFA6_LYRM6"/>
</dbReference>
<dbReference type="InterPro" id="IPR016488">
    <property type="entry name" value="NADH_Ub_cplx-1_asu_su-6"/>
</dbReference>
<dbReference type="PANTHER" id="PTHR12964:SF0">
    <property type="entry name" value="NADH DEHYDROGENASE [UBIQUINONE] 1 ALPHA SUBCOMPLEX SUBUNIT 6"/>
    <property type="match status" value="1"/>
</dbReference>
<dbReference type="PANTHER" id="PTHR12964">
    <property type="entry name" value="NADH-UBIQUINONE OXIDOREDUCTASE B14 SUBUNIT"/>
    <property type="match status" value="1"/>
</dbReference>
<dbReference type="Pfam" id="PF13233">
    <property type="entry name" value="Complex1_LYR_2"/>
    <property type="match status" value="1"/>
</dbReference>
<dbReference type="PIRSF" id="PIRSF006643">
    <property type="entry name" value="NDUA6"/>
    <property type="match status" value="1"/>
</dbReference>